<protein>
    <recommendedName>
        <fullName evidence="1">Nucleotide-binding protein Pput_4372</fullName>
    </recommendedName>
</protein>
<name>Y4372_PSEP1</name>
<keyword id="KW-0547">Nucleotide-binding</keyword>
<organism>
    <name type="scientific">Pseudomonas putida (strain ATCC 700007 / DSM 6899 / JCM 31910 / BCRC 17059 / LMG 24140 / F1)</name>
    <dbReference type="NCBI Taxonomy" id="351746"/>
    <lineage>
        <taxon>Bacteria</taxon>
        <taxon>Pseudomonadati</taxon>
        <taxon>Pseudomonadota</taxon>
        <taxon>Gammaproteobacteria</taxon>
        <taxon>Pseudomonadales</taxon>
        <taxon>Pseudomonadaceae</taxon>
        <taxon>Pseudomonas</taxon>
    </lineage>
</organism>
<dbReference type="EMBL" id="CP000712">
    <property type="protein sequence ID" value="ABQ80495.1"/>
    <property type="molecule type" value="Genomic_DNA"/>
</dbReference>
<dbReference type="SMR" id="A5W8N5"/>
<dbReference type="KEGG" id="ppf:Pput_4372"/>
<dbReference type="eggNOG" id="COG1666">
    <property type="taxonomic scope" value="Bacteria"/>
</dbReference>
<dbReference type="HOGENOM" id="CLU_099839_1_0_6"/>
<dbReference type="GO" id="GO:0005829">
    <property type="term" value="C:cytosol"/>
    <property type="evidence" value="ECO:0007669"/>
    <property type="project" value="TreeGrafter"/>
</dbReference>
<dbReference type="GO" id="GO:0000166">
    <property type="term" value="F:nucleotide binding"/>
    <property type="evidence" value="ECO:0007669"/>
    <property type="project" value="TreeGrafter"/>
</dbReference>
<dbReference type="CDD" id="cd11740">
    <property type="entry name" value="YajQ_like"/>
    <property type="match status" value="1"/>
</dbReference>
<dbReference type="FunFam" id="3.30.70.860:FF:000001">
    <property type="entry name" value="UPF0234 protein YajQ"/>
    <property type="match status" value="1"/>
</dbReference>
<dbReference type="Gene3D" id="3.30.70.860">
    <property type="match status" value="1"/>
</dbReference>
<dbReference type="Gene3D" id="3.30.70.990">
    <property type="entry name" value="YajQ-like, domain 2"/>
    <property type="match status" value="1"/>
</dbReference>
<dbReference type="HAMAP" id="MF_00632">
    <property type="entry name" value="YajQ"/>
    <property type="match status" value="1"/>
</dbReference>
<dbReference type="InterPro" id="IPR007551">
    <property type="entry name" value="DUF520"/>
</dbReference>
<dbReference type="InterPro" id="IPR035571">
    <property type="entry name" value="UPF0234-like_C"/>
</dbReference>
<dbReference type="InterPro" id="IPR035570">
    <property type="entry name" value="UPF0234_N"/>
</dbReference>
<dbReference type="InterPro" id="IPR036183">
    <property type="entry name" value="YajQ-like_sf"/>
</dbReference>
<dbReference type="NCBIfam" id="NF003819">
    <property type="entry name" value="PRK05412.1"/>
    <property type="match status" value="1"/>
</dbReference>
<dbReference type="PANTHER" id="PTHR30476">
    <property type="entry name" value="UPF0234 PROTEIN YAJQ"/>
    <property type="match status" value="1"/>
</dbReference>
<dbReference type="PANTHER" id="PTHR30476:SF0">
    <property type="entry name" value="UPF0234 PROTEIN YAJQ"/>
    <property type="match status" value="1"/>
</dbReference>
<dbReference type="Pfam" id="PF04461">
    <property type="entry name" value="DUF520"/>
    <property type="match status" value="1"/>
</dbReference>
<dbReference type="SUPFAM" id="SSF89963">
    <property type="entry name" value="YajQ-like"/>
    <property type="match status" value="2"/>
</dbReference>
<proteinExistence type="inferred from homology"/>
<evidence type="ECO:0000255" key="1">
    <source>
        <dbReference type="HAMAP-Rule" id="MF_00632"/>
    </source>
</evidence>
<reference key="1">
    <citation type="submission" date="2007-05" db="EMBL/GenBank/DDBJ databases">
        <title>Complete sequence of Pseudomonas putida F1.</title>
        <authorList>
            <consortium name="US DOE Joint Genome Institute"/>
            <person name="Copeland A."/>
            <person name="Lucas S."/>
            <person name="Lapidus A."/>
            <person name="Barry K."/>
            <person name="Detter J.C."/>
            <person name="Glavina del Rio T."/>
            <person name="Hammon N."/>
            <person name="Israni S."/>
            <person name="Dalin E."/>
            <person name="Tice H."/>
            <person name="Pitluck S."/>
            <person name="Chain P."/>
            <person name="Malfatti S."/>
            <person name="Shin M."/>
            <person name="Vergez L."/>
            <person name="Schmutz J."/>
            <person name="Larimer F."/>
            <person name="Land M."/>
            <person name="Hauser L."/>
            <person name="Kyrpides N."/>
            <person name="Lykidis A."/>
            <person name="Parales R."/>
            <person name="Richardson P."/>
        </authorList>
    </citation>
    <scope>NUCLEOTIDE SEQUENCE [LARGE SCALE GENOMIC DNA]</scope>
    <source>
        <strain>ATCC 700007 / DSM 6899 / JCM 31910 / BCRC 17059 / LMG 24140 / F1</strain>
    </source>
</reference>
<feature type="chain" id="PRO_1000061404" description="Nucleotide-binding protein Pput_4372">
    <location>
        <begin position="1"/>
        <end position="161"/>
    </location>
</feature>
<accession>A5W8N5</accession>
<comment type="function">
    <text evidence="1">Nucleotide-binding protein.</text>
</comment>
<comment type="similarity">
    <text evidence="1">Belongs to the YajQ family.</text>
</comment>
<gene>
    <name type="ordered locus">Pput_4372</name>
</gene>
<sequence>MPSFDVVSELDKHEVQNAVDNAIKELDRRYDLKGKGTFEFKDKEQTVMLTAEEEFQLEAMLEILRLALVKRKIDVKCLETKDPYASGKEKKQEAKFREGIDKDLAKKIVATIKDGKLKVQAAIQGEQVRVTGKKRDDLQEAIALLRTKEFDMPLQFNNFRD</sequence>